<organism>
    <name type="scientific">Xanthomonas campestris pv. campestris (strain ATCC 33913 / DSM 3586 / NCPPB 528 / LMG 568 / P 25)</name>
    <dbReference type="NCBI Taxonomy" id="190485"/>
    <lineage>
        <taxon>Bacteria</taxon>
        <taxon>Pseudomonadati</taxon>
        <taxon>Pseudomonadota</taxon>
        <taxon>Gammaproteobacteria</taxon>
        <taxon>Lysobacterales</taxon>
        <taxon>Lysobacteraceae</taxon>
        <taxon>Xanthomonas</taxon>
    </lineage>
</organism>
<dbReference type="EC" id="2.7.4.6" evidence="1"/>
<dbReference type="EMBL" id="AE008922">
    <property type="protein sequence ID" value="AAM41270.1"/>
    <property type="molecule type" value="Genomic_DNA"/>
</dbReference>
<dbReference type="RefSeq" id="NP_637346.1">
    <property type="nucleotide sequence ID" value="NC_003902.1"/>
</dbReference>
<dbReference type="RefSeq" id="WP_002812972.1">
    <property type="nucleotide sequence ID" value="NC_003902.1"/>
</dbReference>
<dbReference type="SMR" id="P65539"/>
<dbReference type="STRING" id="190485.XCC1981"/>
<dbReference type="EnsemblBacteria" id="AAM41270">
    <property type="protein sequence ID" value="AAM41270"/>
    <property type="gene ID" value="XCC1981"/>
</dbReference>
<dbReference type="GeneID" id="98193442"/>
<dbReference type="KEGG" id="xcc:XCC1981"/>
<dbReference type="PATRIC" id="fig|190485.4.peg.2116"/>
<dbReference type="eggNOG" id="COG0105">
    <property type="taxonomic scope" value="Bacteria"/>
</dbReference>
<dbReference type="HOGENOM" id="CLU_060216_8_1_6"/>
<dbReference type="OrthoDB" id="9801161at2"/>
<dbReference type="PRO" id="PR:P65539"/>
<dbReference type="Proteomes" id="UP000001010">
    <property type="component" value="Chromosome"/>
</dbReference>
<dbReference type="GO" id="GO:0005737">
    <property type="term" value="C:cytoplasm"/>
    <property type="evidence" value="ECO:0007669"/>
    <property type="project" value="UniProtKB-SubCell"/>
</dbReference>
<dbReference type="GO" id="GO:0005524">
    <property type="term" value="F:ATP binding"/>
    <property type="evidence" value="ECO:0007669"/>
    <property type="project" value="UniProtKB-UniRule"/>
</dbReference>
<dbReference type="GO" id="GO:0046872">
    <property type="term" value="F:metal ion binding"/>
    <property type="evidence" value="ECO:0007669"/>
    <property type="project" value="UniProtKB-KW"/>
</dbReference>
<dbReference type="GO" id="GO:0004550">
    <property type="term" value="F:nucleoside diphosphate kinase activity"/>
    <property type="evidence" value="ECO:0007669"/>
    <property type="project" value="UniProtKB-UniRule"/>
</dbReference>
<dbReference type="GO" id="GO:0006241">
    <property type="term" value="P:CTP biosynthetic process"/>
    <property type="evidence" value="ECO:0007669"/>
    <property type="project" value="UniProtKB-UniRule"/>
</dbReference>
<dbReference type="GO" id="GO:0006183">
    <property type="term" value="P:GTP biosynthetic process"/>
    <property type="evidence" value="ECO:0007669"/>
    <property type="project" value="UniProtKB-UniRule"/>
</dbReference>
<dbReference type="GO" id="GO:0006163">
    <property type="term" value="P:purine nucleotide metabolic process"/>
    <property type="evidence" value="ECO:0000318"/>
    <property type="project" value="GO_Central"/>
</dbReference>
<dbReference type="GO" id="GO:0006220">
    <property type="term" value="P:pyrimidine nucleotide metabolic process"/>
    <property type="evidence" value="ECO:0000318"/>
    <property type="project" value="GO_Central"/>
</dbReference>
<dbReference type="GO" id="GO:0006228">
    <property type="term" value="P:UTP biosynthetic process"/>
    <property type="evidence" value="ECO:0007669"/>
    <property type="project" value="UniProtKB-UniRule"/>
</dbReference>
<dbReference type="CDD" id="cd04413">
    <property type="entry name" value="NDPk_I"/>
    <property type="match status" value="1"/>
</dbReference>
<dbReference type="FunFam" id="3.30.70.141:FF:000001">
    <property type="entry name" value="Nucleoside diphosphate kinase"/>
    <property type="match status" value="1"/>
</dbReference>
<dbReference type="Gene3D" id="3.30.70.141">
    <property type="entry name" value="Nucleoside diphosphate kinase-like domain"/>
    <property type="match status" value="1"/>
</dbReference>
<dbReference type="HAMAP" id="MF_00451">
    <property type="entry name" value="NDP_kinase"/>
    <property type="match status" value="1"/>
</dbReference>
<dbReference type="InterPro" id="IPR034907">
    <property type="entry name" value="NDK-like_dom"/>
</dbReference>
<dbReference type="InterPro" id="IPR036850">
    <property type="entry name" value="NDK-like_dom_sf"/>
</dbReference>
<dbReference type="InterPro" id="IPR001564">
    <property type="entry name" value="Nucleoside_diP_kinase"/>
</dbReference>
<dbReference type="InterPro" id="IPR023005">
    <property type="entry name" value="Nucleoside_diP_kinase_AS"/>
</dbReference>
<dbReference type="NCBIfam" id="NF001908">
    <property type="entry name" value="PRK00668.1"/>
    <property type="match status" value="1"/>
</dbReference>
<dbReference type="PANTHER" id="PTHR11349">
    <property type="entry name" value="NUCLEOSIDE DIPHOSPHATE KINASE"/>
    <property type="match status" value="1"/>
</dbReference>
<dbReference type="Pfam" id="PF00334">
    <property type="entry name" value="NDK"/>
    <property type="match status" value="1"/>
</dbReference>
<dbReference type="PRINTS" id="PR01243">
    <property type="entry name" value="NUCDPKINASE"/>
</dbReference>
<dbReference type="SMART" id="SM00562">
    <property type="entry name" value="NDK"/>
    <property type="match status" value="1"/>
</dbReference>
<dbReference type="SUPFAM" id="SSF54919">
    <property type="entry name" value="Nucleoside diphosphate kinase, NDK"/>
    <property type="match status" value="1"/>
</dbReference>
<dbReference type="PROSITE" id="PS00469">
    <property type="entry name" value="NDPK"/>
    <property type="match status" value="1"/>
</dbReference>
<dbReference type="PROSITE" id="PS51374">
    <property type="entry name" value="NDPK_LIKE"/>
    <property type="match status" value="1"/>
</dbReference>
<accession>P65539</accession>
<accession>Q8NKZ9</accession>
<comment type="function">
    <text evidence="1">Major role in the synthesis of nucleoside triphosphates other than ATP. The ATP gamma phosphate is transferred to the NDP beta phosphate via a ping-pong mechanism, using a phosphorylated active-site intermediate.</text>
</comment>
<comment type="catalytic activity">
    <reaction evidence="1">
        <text>a 2'-deoxyribonucleoside 5'-diphosphate + ATP = a 2'-deoxyribonucleoside 5'-triphosphate + ADP</text>
        <dbReference type="Rhea" id="RHEA:44640"/>
        <dbReference type="ChEBI" id="CHEBI:30616"/>
        <dbReference type="ChEBI" id="CHEBI:61560"/>
        <dbReference type="ChEBI" id="CHEBI:73316"/>
        <dbReference type="ChEBI" id="CHEBI:456216"/>
        <dbReference type="EC" id="2.7.4.6"/>
    </reaction>
</comment>
<comment type="catalytic activity">
    <reaction evidence="1">
        <text>a ribonucleoside 5'-diphosphate + ATP = a ribonucleoside 5'-triphosphate + ADP</text>
        <dbReference type="Rhea" id="RHEA:18113"/>
        <dbReference type="ChEBI" id="CHEBI:30616"/>
        <dbReference type="ChEBI" id="CHEBI:57930"/>
        <dbReference type="ChEBI" id="CHEBI:61557"/>
        <dbReference type="ChEBI" id="CHEBI:456216"/>
        <dbReference type="EC" id="2.7.4.6"/>
    </reaction>
</comment>
<comment type="cofactor">
    <cofactor evidence="1">
        <name>Mg(2+)</name>
        <dbReference type="ChEBI" id="CHEBI:18420"/>
    </cofactor>
</comment>
<comment type="subunit">
    <text evidence="1">Homotetramer.</text>
</comment>
<comment type="subcellular location">
    <subcellularLocation>
        <location evidence="1">Cytoplasm</location>
    </subcellularLocation>
</comment>
<comment type="similarity">
    <text evidence="1">Belongs to the NDK family.</text>
</comment>
<name>NDK_XANCP</name>
<sequence>MALERTLSIIKPDAVAKNVIGEIYSRFEKAGLKVVAAKYKQLSRREAEGFYAVHRERPFFNALVEFMISGPVMIQALEGENAVAAHRDLLGATNPKDAAPGTIRADFADSIDANAAHGSDSVENAANEVAYFFAATEVVSR</sequence>
<gene>
    <name evidence="1" type="primary">ndk</name>
    <name type="ordered locus">XCC1981</name>
</gene>
<proteinExistence type="inferred from homology"/>
<keyword id="KW-0067">ATP-binding</keyword>
<keyword id="KW-0963">Cytoplasm</keyword>
<keyword id="KW-0418">Kinase</keyword>
<keyword id="KW-0460">Magnesium</keyword>
<keyword id="KW-0479">Metal-binding</keyword>
<keyword id="KW-0546">Nucleotide metabolism</keyword>
<keyword id="KW-0547">Nucleotide-binding</keyword>
<keyword id="KW-0597">Phosphoprotein</keyword>
<keyword id="KW-1185">Reference proteome</keyword>
<keyword id="KW-0808">Transferase</keyword>
<evidence type="ECO:0000255" key="1">
    <source>
        <dbReference type="HAMAP-Rule" id="MF_00451"/>
    </source>
</evidence>
<feature type="chain" id="PRO_0000137080" description="Nucleoside diphosphate kinase">
    <location>
        <begin position="1"/>
        <end position="141"/>
    </location>
</feature>
<feature type="active site" description="Pros-phosphohistidine intermediate" evidence="1">
    <location>
        <position position="117"/>
    </location>
</feature>
<feature type="binding site" evidence="1">
    <location>
        <position position="11"/>
    </location>
    <ligand>
        <name>ATP</name>
        <dbReference type="ChEBI" id="CHEBI:30616"/>
    </ligand>
</feature>
<feature type="binding site" evidence="1">
    <location>
        <position position="59"/>
    </location>
    <ligand>
        <name>ATP</name>
        <dbReference type="ChEBI" id="CHEBI:30616"/>
    </ligand>
</feature>
<feature type="binding site" evidence="1">
    <location>
        <position position="87"/>
    </location>
    <ligand>
        <name>ATP</name>
        <dbReference type="ChEBI" id="CHEBI:30616"/>
    </ligand>
</feature>
<feature type="binding site" evidence="1">
    <location>
        <position position="93"/>
    </location>
    <ligand>
        <name>ATP</name>
        <dbReference type="ChEBI" id="CHEBI:30616"/>
    </ligand>
</feature>
<feature type="binding site" evidence="1">
    <location>
        <position position="104"/>
    </location>
    <ligand>
        <name>ATP</name>
        <dbReference type="ChEBI" id="CHEBI:30616"/>
    </ligand>
</feature>
<feature type="binding site" evidence="1">
    <location>
        <position position="114"/>
    </location>
    <ligand>
        <name>ATP</name>
        <dbReference type="ChEBI" id="CHEBI:30616"/>
    </ligand>
</feature>
<reference key="1">
    <citation type="journal article" date="2002" name="Nature">
        <title>Comparison of the genomes of two Xanthomonas pathogens with differing host specificities.</title>
        <authorList>
            <person name="da Silva A.C.R."/>
            <person name="Ferro J.A."/>
            <person name="Reinach F.C."/>
            <person name="Farah C.S."/>
            <person name="Furlan L.R."/>
            <person name="Quaggio R.B."/>
            <person name="Monteiro-Vitorello C.B."/>
            <person name="Van Sluys M.A."/>
            <person name="Almeida N.F. Jr."/>
            <person name="Alves L.M.C."/>
            <person name="do Amaral A.M."/>
            <person name="Bertolini M.C."/>
            <person name="Camargo L.E.A."/>
            <person name="Camarotte G."/>
            <person name="Cannavan F."/>
            <person name="Cardozo J."/>
            <person name="Chambergo F."/>
            <person name="Ciapina L.P."/>
            <person name="Cicarelli R.M.B."/>
            <person name="Coutinho L.L."/>
            <person name="Cursino-Santos J.R."/>
            <person name="El-Dorry H."/>
            <person name="Faria J.B."/>
            <person name="Ferreira A.J.S."/>
            <person name="Ferreira R.C.C."/>
            <person name="Ferro M.I.T."/>
            <person name="Formighieri E.F."/>
            <person name="Franco M.C."/>
            <person name="Greggio C.C."/>
            <person name="Gruber A."/>
            <person name="Katsuyama A.M."/>
            <person name="Kishi L.T."/>
            <person name="Leite R.P."/>
            <person name="Lemos E.G.M."/>
            <person name="Lemos M.V.F."/>
            <person name="Locali E.C."/>
            <person name="Machado M.A."/>
            <person name="Madeira A.M.B.N."/>
            <person name="Martinez-Rossi N.M."/>
            <person name="Martins E.C."/>
            <person name="Meidanis J."/>
            <person name="Menck C.F.M."/>
            <person name="Miyaki C.Y."/>
            <person name="Moon D.H."/>
            <person name="Moreira L.M."/>
            <person name="Novo M.T.M."/>
            <person name="Okura V.K."/>
            <person name="Oliveira M.C."/>
            <person name="Oliveira V.R."/>
            <person name="Pereira H.A."/>
            <person name="Rossi A."/>
            <person name="Sena J.A.D."/>
            <person name="Silva C."/>
            <person name="de Souza R.F."/>
            <person name="Spinola L.A.F."/>
            <person name="Takita M.A."/>
            <person name="Tamura R.E."/>
            <person name="Teixeira E.C."/>
            <person name="Tezza R.I.D."/>
            <person name="Trindade dos Santos M."/>
            <person name="Truffi D."/>
            <person name="Tsai S.M."/>
            <person name="White F.F."/>
            <person name="Setubal J.C."/>
            <person name="Kitajima J.P."/>
        </authorList>
    </citation>
    <scope>NUCLEOTIDE SEQUENCE [LARGE SCALE GENOMIC DNA]</scope>
    <source>
        <strain>ATCC 33913 / DSM 3586 / NCPPB 528 / LMG 568 / P 25</strain>
    </source>
</reference>
<protein>
    <recommendedName>
        <fullName evidence="1">Nucleoside diphosphate kinase</fullName>
        <shortName evidence="1">NDK</shortName>
        <shortName evidence="1">NDP kinase</shortName>
        <ecNumber evidence="1">2.7.4.6</ecNumber>
    </recommendedName>
    <alternativeName>
        <fullName evidence="1">Nucleoside-2-P kinase</fullName>
    </alternativeName>
</protein>